<dbReference type="EMBL" id="AE001363">
    <property type="protein sequence ID" value="AAD18682.1"/>
    <property type="molecule type" value="Genomic_DNA"/>
</dbReference>
<dbReference type="EMBL" id="AE002161">
    <property type="protein sequence ID" value="AAF73641.1"/>
    <property type="molecule type" value="Genomic_DNA"/>
</dbReference>
<dbReference type="EMBL" id="BA000008">
    <property type="protein sequence ID" value="BAA98748.1"/>
    <property type="molecule type" value="Genomic_DNA"/>
</dbReference>
<dbReference type="EMBL" id="AE009440">
    <property type="protein sequence ID" value="AAP98492.1"/>
    <property type="molecule type" value="Genomic_DNA"/>
</dbReference>
<dbReference type="PIR" id="B86558">
    <property type="entry name" value="B86558"/>
</dbReference>
<dbReference type="PIR" id="G72064">
    <property type="entry name" value="G72064"/>
</dbReference>
<dbReference type="RefSeq" id="NP_224738.1">
    <property type="nucleotide sequence ID" value="NC_000922.1"/>
</dbReference>
<dbReference type="RefSeq" id="WP_010883180.1">
    <property type="nucleotide sequence ID" value="NZ_LN847257.1"/>
</dbReference>
<dbReference type="SMR" id="Q9Z810"/>
<dbReference type="STRING" id="406984.CPK_ORF01057"/>
<dbReference type="GeneID" id="45050585"/>
<dbReference type="KEGG" id="cpa:CP_0210"/>
<dbReference type="KEGG" id="cpj:CPj0542"/>
<dbReference type="KEGG" id="cpn:CPn_0542"/>
<dbReference type="KEGG" id="cpt:CpB0563"/>
<dbReference type="PATRIC" id="fig|115713.3.peg.602"/>
<dbReference type="eggNOG" id="COG1121">
    <property type="taxonomic scope" value="Bacteria"/>
</dbReference>
<dbReference type="HOGENOM" id="CLU_000604_1_11_0"/>
<dbReference type="OrthoDB" id="9806726at2"/>
<dbReference type="Proteomes" id="UP000000583">
    <property type="component" value="Chromosome"/>
</dbReference>
<dbReference type="Proteomes" id="UP000000801">
    <property type="component" value="Chromosome"/>
</dbReference>
<dbReference type="GO" id="GO:0005886">
    <property type="term" value="C:plasma membrane"/>
    <property type="evidence" value="ECO:0007669"/>
    <property type="project" value="UniProtKB-SubCell"/>
</dbReference>
<dbReference type="GO" id="GO:0005524">
    <property type="term" value="F:ATP binding"/>
    <property type="evidence" value="ECO:0007669"/>
    <property type="project" value="UniProtKB-KW"/>
</dbReference>
<dbReference type="GO" id="GO:0016887">
    <property type="term" value="F:ATP hydrolysis activity"/>
    <property type="evidence" value="ECO:0007669"/>
    <property type="project" value="InterPro"/>
</dbReference>
<dbReference type="CDD" id="cd03235">
    <property type="entry name" value="ABC_Metallic_Cations"/>
    <property type="match status" value="1"/>
</dbReference>
<dbReference type="Gene3D" id="3.40.50.300">
    <property type="entry name" value="P-loop containing nucleotide triphosphate hydrolases"/>
    <property type="match status" value="1"/>
</dbReference>
<dbReference type="InterPro" id="IPR003593">
    <property type="entry name" value="AAA+_ATPase"/>
</dbReference>
<dbReference type="InterPro" id="IPR003439">
    <property type="entry name" value="ABC_transporter-like_ATP-bd"/>
</dbReference>
<dbReference type="InterPro" id="IPR017871">
    <property type="entry name" value="ABC_transporter-like_CS"/>
</dbReference>
<dbReference type="InterPro" id="IPR050153">
    <property type="entry name" value="Metal_Ion_Import_ABC"/>
</dbReference>
<dbReference type="InterPro" id="IPR027417">
    <property type="entry name" value="P-loop_NTPase"/>
</dbReference>
<dbReference type="PANTHER" id="PTHR42734">
    <property type="entry name" value="METAL TRANSPORT SYSTEM ATP-BINDING PROTEIN TM_0124-RELATED"/>
    <property type="match status" value="1"/>
</dbReference>
<dbReference type="PANTHER" id="PTHR42734:SF17">
    <property type="entry name" value="METAL TRANSPORT SYSTEM ATP-BINDING PROTEIN TM_0124-RELATED"/>
    <property type="match status" value="1"/>
</dbReference>
<dbReference type="Pfam" id="PF00005">
    <property type="entry name" value="ABC_tran"/>
    <property type="match status" value="1"/>
</dbReference>
<dbReference type="SMART" id="SM00382">
    <property type="entry name" value="AAA"/>
    <property type="match status" value="1"/>
</dbReference>
<dbReference type="SUPFAM" id="SSF52540">
    <property type="entry name" value="P-loop containing nucleoside triphosphate hydrolases"/>
    <property type="match status" value="1"/>
</dbReference>
<dbReference type="PROSITE" id="PS00211">
    <property type="entry name" value="ABC_TRANSPORTER_1"/>
    <property type="match status" value="1"/>
</dbReference>
<dbReference type="PROSITE" id="PS50893">
    <property type="entry name" value="ABC_TRANSPORTER_2"/>
    <property type="match status" value="1"/>
</dbReference>
<organism>
    <name type="scientific">Chlamydia pneumoniae</name>
    <name type="common">Chlamydophila pneumoniae</name>
    <dbReference type="NCBI Taxonomy" id="83558"/>
    <lineage>
        <taxon>Bacteria</taxon>
        <taxon>Pseudomonadati</taxon>
        <taxon>Chlamydiota</taxon>
        <taxon>Chlamydiia</taxon>
        <taxon>Chlamydiales</taxon>
        <taxon>Chlamydiaceae</taxon>
        <taxon>Chlamydia/Chlamydophila group</taxon>
        <taxon>Chlamydia</taxon>
    </lineage>
</organism>
<sequence length="245" mass="27353">MTIRILAEGLAFRYGSKGPNIIHDVSFSVYDGDFIGIIGPNGGGKSTLTMLILGLLTPTFGSLKTFPSHSAGKQTHSMIGWVPQHFSYDPCFPISVKDVVLSGRLSQLSWHGKYKKKDFEAVDHALDLVGLSDHHHHCFAHLSGGQIQRVLLARALASYPEILILDEPTTNIDPDNQQRILSILKKLNRTCTILMVTHDLHHTTNYFNKVFYMNKTLTSLADTSTLTDQFCCHPYKNQEFSCSPH</sequence>
<comment type="function">
    <text>Part of an ATP-driven transport system CPn0541/CPn0542/CPn0543 for a metal. Probably responsible for energy coupling to the transport system.</text>
</comment>
<comment type="subcellular location">
    <subcellularLocation>
        <location evidence="2">Cell inner membrane</location>
        <topology evidence="2">Peripheral membrane protein</topology>
    </subcellularLocation>
</comment>
<comment type="similarity">
    <text evidence="2">Belongs to the ABC transporter superfamily.</text>
</comment>
<name>Y542_CHLPN</name>
<feature type="chain" id="PRO_0000093233" description="Probable metal transport system ATP-binding protein CPn_0542/CP_0210/CPj0542/CpB0563">
    <location>
        <begin position="1"/>
        <end position="245"/>
    </location>
</feature>
<feature type="domain" description="ABC transporter" evidence="1">
    <location>
        <begin position="5"/>
        <end position="240"/>
    </location>
</feature>
<feature type="binding site" evidence="1">
    <location>
        <begin position="39"/>
        <end position="46"/>
    </location>
    <ligand>
        <name>ATP</name>
        <dbReference type="ChEBI" id="CHEBI:30616"/>
    </ligand>
</feature>
<proteinExistence type="inferred from homology"/>
<keyword id="KW-0067">ATP-binding</keyword>
<keyword id="KW-0997">Cell inner membrane</keyword>
<keyword id="KW-1003">Cell membrane</keyword>
<keyword id="KW-0472">Membrane</keyword>
<keyword id="KW-0547">Nucleotide-binding</keyword>
<keyword id="KW-0813">Transport</keyword>
<gene>
    <name type="ordered locus">CPn_0542</name>
    <name type="ordered locus">CP_0210</name>
    <name type="ordered locus">CPj0542</name>
    <name type="ordered locus">CpB0563</name>
</gene>
<evidence type="ECO:0000255" key="1">
    <source>
        <dbReference type="PROSITE-ProRule" id="PRU00434"/>
    </source>
</evidence>
<evidence type="ECO:0000305" key="2"/>
<accession>Q9Z810</accession>
<reference key="1">
    <citation type="journal article" date="1999" name="Nat. Genet.">
        <title>Comparative genomes of Chlamydia pneumoniae and C. trachomatis.</title>
        <authorList>
            <person name="Kalman S."/>
            <person name="Mitchell W.P."/>
            <person name="Marathe R."/>
            <person name="Lammel C.J."/>
            <person name="Fan J."/>
            <person name="Hyman R.W."/>
            <person name="Olinger L."/>
            <person name="Grimwood J."/>
            <person name="Davis R.W."/>
            <person name="Stephens R.S."/>
        </authorList>
    </citation>
    <scope>NUCLEOTIDE SEQUENCE [LARGE SCALE GENOMIC DNA]</scope>
    <source>
        <strain>CWL029</strain>
    </source>
</reference>
<reference key="2">
    <citation type="journal article" date="2000" name="Nucleic Acids Res.">
        <title>Genome sequences of Chlamydia trachomatis MoPn and Chlamydia pneumoniae AR39.</title>
        <authorList>
            <person name="Read T.D."/>
            <person name="Brunham R.C."/>
            <person name="Shen C."/>
            <person name="Gill S.R."/>
            <person name="Heidelberg J.F."/>
            <person name="White O."/>
            <person name="Hickey E.K."/>
            <person name="Peterson J.D."/>
            <person name="Utterback T.R."/>
            <person name="Berry K.J."/>
            <person name="Bass S."/>
            <person name="Linher K.D."/>
            <person name="Weidman J.F."/>
            <person name="Khouri H.M."/>
            <person name="Craven B."/>
            <person name="Bowman C."/>
            <person name="Dodson R.J."/>
            <person name="Gwinn M.L."/>
            <person name="Nelson W.C."/>
            <person name="DeBoy R.T."/>
            <person name="Kolonay J.F."/>
            <person name="McClarty G."/>
            <person name="Salzberg S.L."/>
            <person name="Eisen J.A."/>
            <person name="Fraser C.M."/>
        </authorList>
    </citation>
    <scope>NUCLEOTIDE SEQUENCE [LARGE SCALE GENOMIC DNA]</scope>
    <source>
        <strain>AR39</strain>
    </source>
</reference>
<reference key="3">
    <citation type="journal article" date="2000" name="Nucleic Acids Res.">
        <title>Comparison of whole genome sequences of Chlamydia pneumoniae J138 from Japan and CWL029 from USA.</title>
        <authorList>
            <person name="Shirai M."/>
            <person name="Hirakawa H."/>
            <person name="Kimoto M."/>
            <person name="Tabuchi M."/>
            <person name="Kishi F."/>
            <person name="Ouchi K."/>
            <person name="Shiba T."/>
            <person name="Ishii K."/>
            <person name="Hattori M."/>
            <person name="Kuhara S."/>
            <person name="Nakazawa T."/>
        </authorList>
    </citation>
    <scope>NUCLEOTIDE SEQUENCE [LARGE SCALE GENOMIC DNA]</scope>
    <source>
        <strain>J138</strain>
    </source>
</reference>
<reference key="4">
    <citation type="submission" date="2002-05" db="EMBL/GenBank/DDBJ databases">
        <title>The genome sequence of Chlamydia pneumoniae TW183 and comparison with other Chlamydia strains based on whole genome sequence analysis.</title>
        <authorList>
            <person name="Geng M.M."/>
            <person name="Schuhmacher A."/>
            <person name="Muehldorfer I."/>
            <person name="Bensch K.W."/>
            <person name="Schaefer K.P."/>
            <person name="Schneider S."/>
            <person name="Pohl T."/>
            <person name="Essig A."/>
            <person name="Marre R."/>
            <person name="Melchers K."/>
        </authorList>
    </citation>
    <scope>NUCLEOTIDE SEQUENCE [LARGE SCALE GENOMIC DNA]</scope>
    <source>
        <strain>TW-183</strain>
    </source>
</reference>
<protein>
    <recommendedName>
        <fullName>Probable metal transport system ATP-binding protein CPn_0542/CP_0210/CPj0542/CpB0563</fullName>
    </recommendedName>
</protein>